<comment type="catalytic activity">
    <reaction>
        <text>DNA(n) + a 2'-deoxyribonucleoside 5'-triphosphate = DNA(n+1) + diphosphate</text>
        <dbReference type="Rhea" id="RHEA:22508"/>
        <dbReference type="Rhea" id="RHEA-COMP:17339"/>
        <dbReference type="Rhea" id="RHEA-COMP:17340"/>
        <dbReference type="ChEBI" id="CHEBI:33019"/>
        <dbReference type="ChEBI" id="CHEBI:61560"/>
        <dbReference type="ChEBI" id="CHEBI:173112"/>
        <dbReference type="EC" id="2.7.7.7"/>
    </reaction>
</comment>
<comment type="subcellular location">
    <subcellularLocation>
        <location>Host nucleus</location>
    </subcellularLocation>
</comment>
<comment type="similarity">
    <text evidence="1">Belongs to the DNA polymerase type-B family.</text>
</comment>
<feature type="chain" id="PRO_0000046521" description="DNA polymerase">
    <location>
        <begin position="1"/>
        <end position="1512"/>
    </location>
</feature>
<sequence>MDRNAVLYGVLEHRLPKWVELSDDTDLEPFFFSSVRYITAGSEDAIMIQALNLNTDEIVVFLVTNLNFMALIPTVYIENPGIRQLIASTPISYRSPITVFNGDLKKWMDCDLFVFGTMAAQKAFIKAGNSVLGSLGGNVYTYGDHVSNFDGNTPVLQNNLMCSHVYYTRYKTDVYAPWEFYYDQKRDQGYLMSLPAIIPRCKREGAFDIETIVHENAMDQDLNCQKFFKSEFRSMEESQVLIQRFREAGVTGLPPSPFVGITQKLHEIVSISLVVCNYHKTGPKKKEYYVYYNTKKMENPMEMIPVEHLHLDASRIKFEACKNEFYMLLAFINRLRKSVNVLYVYNAQFDIQVIQQRLRYYAFKQRAPRCCKGHDDIPHEWGKALMEKWEAFLSVKPQLFKAQILMGQDILKANYLKLLEGIGSVLAQAKSTMAKMCTIKERIDSYRKMKDTVQNFKSHGFGCDIIDMMYVCKRKEFEAKDGSLNTVAQLIIKKFKPHKATPKIHKMDDITYDKLDGYYRAGGTKIAECLIYNLIDSLLVIRIAKNLKPMEEYIYRQLACYNIDTAAHTRGVMNFCGFIQSTKVVEVSRNKARLDAGIVMATDYIRNSLFTPETIPRRGGFVMAPLTGLFFARPTQCFELCLDFTSMYPSMMCDLNISPETIVDSDKTNRVGDYMGYDWSKIDQGFEKFTLVLRVDRTDPENPKLVRHTSDTSLSLKRYLRLRTEHKRALKQSSGSVAEYHNRLQNEMKICTNTHYGVSEHTCSLMITTQGQHKIKLVNEFIKTLNRTGHSLFPNYGDTDSTMLYHPSDESETQLEDMVTLEDEMRAELREYMLKKLSAELVNRVKEKTKRTDTFVQSFLSDVETVLFDDMVEKLRLFSQGEVIEPFKDGGTWWVVDPLTGIWMDCSTPFSSELICKLEYENASSIGCHVAKKMYLSLVHELNNGEIINTKIKKRGMTGFKSSRFGATESITNDFMDLIFNGGALVKTGHLEALKPVTWAKLSAPADILHFSEPPVYENGICLNMNSITLIPHRVTAVTRLPCPDIKGGELVYVDLHESTSGKSSVLVLVLADGCALNHIFSSANVLHRELSFETIAMFRAFFVGAGFLDPNSIVFYERIPRLKPEFLSKITNYELFTGKKLKIPFVTLHKRKTTIQAIVKEDKKQIDYPEEWIKQDPAMAMFRRYPIDLRLERMIMDYFGSGLKCTLATFTPPKYTVSGERSRHSIVIKNHVDKHYLNDNSKFLAHVVMDRAMPTTCYIHDDIDVKAMIQSVISRVVRMIQDTQVRLQELSAAGNKLFHMFFNQLPPEMNNLDISFKYNPLVDHALQGQKGVPGLQYGNPEQIYTDMITEMTALLPRIGHMVEFMEWSQELSSSKTLCLLLPKIARDLNVPPLVTSLNDDTGNAMLIAFAHKIYIATAMLHILHGENLETHDLGPQTGTGVVGEPPKHCTGAQLREWFIDLQKTLALDAPSTHCAGCADFWLTHGSDPNFIEKMYRVNGGVFVRKIKKICL</sequence>
<accession>P28859</accession>
<accession>Q00157</accession>
<dbReference type="EC" id="2.7.7.7"/>
<dbReference type="EMBL" id="M75136">
    <property type="protein sequence ID" value="AAA88160.2"/>
    <property type="molecule type" value="Genomic_DNA"/>
</dbReference>
<dbReference type="PIR" id="D36792">
    <property type="entry name" value="DJBEI1"/>
</dbReference>
<dbReference type="PIR" id="E36792">
    <property type="entry name" value="E36792"/>
</dbReference>
<dbReference type="KEGG" id="vg:1488370"/>
<dbReference type="Proteomes" id="UP000007643">
    <property type="component" value="Segment"/>
</dbReference>
<dbReference type="GO" id="GO:0042025">
    <property type="term" value="C:host cell nucleus"/>
    <property type="evidence" value="ECO:0007669"/>
    <property type="project" value="UniProtKB-SubCell"/>
</dbReference>
<dbReference type="GO" id="GO:0003677">
    <property type="term" value="F:DNA binding"/>
    <property type="evidence" value="ECO:0007669"/>
    <property type="project" value="UniProtKB-KW"/>
</dbReference>
<dbReference type="GO" id="GO:0003887">
    <property type="term" value="F:DNA-directed DNA polymerase activity"/>
    <property type="evidence" value="ECO:0007669"/>
    <property type="project" value="UniProtKB-KW"/>
</dbReference>
<dbReference type="GO" id="GO:0000166">
    <property type="term" value="F:nucleotide binding"/>
    <property type="evidence" value="ECO:0007669"/>
    <property type="project" value="InterPro"/>
</dbReference>
<dbReference type="GO" id="GO:0006260">
    <property type="term" value="P:DNA replication"/>
    <property type="evidence" value="ECO:0007669"/>
    <property type="project" value="UniProtKB-KW"/>
</dbReference>
<dbReference type="GO" id="GO:0039693">
    <property type="term" value="P:viral DNA genome replication"/>
    <property type="evidence" value="ECO:0007669"/>
    <property type="project" value="UniProtKB-KW"/>
</dbReference>
<dbReference type="Gene3D" id="3.90.1600.10">
    <property type="entry name" value="Palm domain of DNA polymerase"/>
    <property type="match status" value="1"/>
</dbReference>
<dbReference type="Gene3D" id="3.30.420.10">
    <property type="entry name" value="Ribonuclease H-like superfamily/Ribonuclease H"/>
    <property type="match status" value="1"/>
</dbReference>
<dbReference type="InterPro" id="IPR006172">
    <property type="entry name" value="DNA-dir_DNA_pol_B"/>
</dbReference>
<dbReference type="InterPro" id="IPR017964">
    <property type="entry name" value="DNA-dir_DNA_pol_B_CS"/>
</dbReference>
<dbReference type="InterPro" id="IPR006134">
    <property type="entry name" value="DNA-dir_DNA_pol_B_multi_dom"/>
</dbReference>
<dbReference type="InterPro" id="IPR043502">
    <property type="entry name" value="DNA/RNA_pol_sf"/>
</dbReference>
<dbReference type="InterPro" id="IPR023211">
    <property type="entry name" value="DNA_pol_palm_dom_sf"/>
</dbReference>
<dbReference type="InterPro" id="IPR050240">
    <property type="entry name" value="DNA_pol_type-B"/>
</dbReference>
<dbReference type="InterPro" id="IPR012337">
    <property type="entry name" value="RNaseH-like_sf"/>
</dbReference>
<dbReference type="InterPro" id="IPR036397">
    <property type="entry name" value="RNaseH_sf"/>
</dbReference>
<dbReference type="PANTHER" id="PTHR10322">
    <property type="entry name" value="DNA POLYMERASE CATALYTIC SUBUNIT"/>
    <property type="match status" value="1"/>
</dbReference>
<dbReference type="PANTHER" id="PTHR10322:SF23">
    <property type="entry name" value="DNA POLYMERASE DELTA CATALYTIC SUBUNIT"/>
    <property type="match status" value="1"/>
</dbReference>
<dbReference type="Pfam" id="PF00136">
    <property type="entry name" value="DNA_pol_B"/>
    <property type="match status" value="1"/>
</dbReference>
<dbReference type="SMART" id="SM00486">
    <property type="entry name" value="POLBc"/>
    <property type="match status" value="1"/>
</dbReference>
<dbReference type="SUPFAM" id="SSF56672">
    <property type="entry name" value="DNA/RNA polymerases"/>
    <property type="match status" value="1"/>
</dbReference>
<dbReference type="SUPFAM" id="SSF53098">
    <property type="entry name" value="Ribonuclease H-like"/>
    <property type="match status" value="1"/>
</dbReference>
<dbReference type="PROSITE" id="PS00116">
    <property type="entry name" value="DNA_POLYMERASE_B"/>
    <property type="match status" value="1"/>
</dbReference>
<gene>
    <name type="primary">57/58</name>
</gene>
<name>DPOL_ICHVA</name>
<organism>
    <name type="scientific">Ictalurid herpesvirus 1 (strain Auburn)</name>
    <name type="common">IcHV-1</name>
    <name type="synonym">Channel catfish herpesvirus</name>
    <dbReference type="NCBI Taxonomy" id="766178"/>
    <lineage>
        <taxon>Viruses</taxon>
        <taxon>Duplodnaviria</taxon>
        <taxon>Heunggongvirae</taxon>
        <taxon>Peploviricota</taxon>
        <taxon>Herviviricetes</taxon>
        <taxon>Herpesvirales</taxon>
        <taxon>Alloherpesviridae</taxon>
        <taxon>Ictavirus</taxon>
        <taxon>Ictavirus ictaluridallo1</taxon>
        <taxon>Ictalurid herpesvirus 1</taxon>
    </lineage>
</organism>
<proteinExistence type="inferred from homology"/>
<reference key="1">
    <citation type="journal article" date="1992" name="Virology">
        <title>Channel catfish virus: a new type of herpesvirus.</title>
        <authorList>
            <person name="Davison A.J."/>
        </authorList>
    </citation>
    <scope>NUCLEOTIDE SEQUENCE [LARGE SCALE GENOMIC DNA]</scope>
</reference>
<reference key="2">
    <citation type="submission" date="2006-04" db="EMBL/GenBank/DDBJ databases">
        <authorList>
            <person name="Davison A.J."/>
        </authorList>
    </citation>
    <scope>SEQUENCE REVISION</scope>
</reference>
<organismHost>
    <name type="scientific">Ictaluridae</name>
    <name type="common">bullhead catfishes</name>
    <dbReference type="NCBI Taxonomy" id="7996"/>
</organismHost>
<protein>
    <recommendedName>
        <fullName>DNA polymerase</fullName>
        <ecNumber>2.7.7.7</ecNumber>
    </recommendedName>
</protein>
<evidence type="ECO:0000305" key="1"/>
<keyword id="KW-0235">DNA replication</keyword>
<keyword id="KW-0238">DNA-binding</keyword>
<keyword id="KW-0239">DNA-directed DNA polymerase</keyword>
<keyword id="KW-1048">Host nucleus</keyword>
<keyword id="KW-0548">Nucleotidyltransferase</keyword>
<keyword id="KW-1185">Reference proteome</keyword>
<keyword id="KW-0808">Transferase</keyword>
<keyword id="KW-1194">Viral DNA replication</keyword>